<proteinExistence type="inferred from homology"/>
<name>TILS_RICTY</name>
<organism>
    <name type="scientific">Rickettsia typhi (strain ATCC VR-144 / Wilmington)</name>
    <dbReference type="NCBI Taxonomy" id="257363"/>
    <lineage>
        <taxon>Bacteria</taxon>
        <taxon>Pseudomonadati</taxon>
        <taxon>Pseudomonadota</taxon>
        <taxon>Alphaproteobacteria</taxon>
        <taxon>Rickettsiales</taxon>
        <taxon>Rickettsiaceae</taxon>
        <taxon>Rickettsieae</taxon>
        <taxon>Rickettsia</taxon>
        <taxon>typhus group</taxon>
    </lineage>
</organism>
<comment type="function">
    <text evidence="1">Ligates lysine onto the cytidine present at position 34 of the AUA codon-specific tRNA(Ile) that contains the anticodon CAU, in an ATP-dependent manner. Cytidine is converted to lysidine, thus changing the amino acid specificity of the tRNA from methionine to isoleucine.</text>
</comment>
<comment type="catalytic activity">
    <reaction evidence="1">
        <text>cytidine(34) in tRNA(Ile2) + L-lysine + ATP = lysidine(34) in tRNA(Ile2) + AMP + diphosphate + H(+)</text>
        <dbReference type="Rhea" id="RHEA:43744"/>
        <dbReference type="Rhea" id="RHEA-COMP:10625"/>
        <dbReference type="Rhea" id="RHEA-COMP:10670"/>
        <dbReference type="ChEBI" id="CHEBI:15378"/>
        <dbReference type="ChEBI" id="CHEBI:30616"/>
        <dbReference type="ChEBI" id="CHEBI:32551"/>
        <dbReference type="ChEBI" id="CHEBI:33019"/>
        <dbReference type="ChEBI" id="CHEBI:82748"/>
        <dbReference type="ChEBI" id="CHEBI:83665"/>
        <dbReference type="ChEBI" id="CHEBI:456215"/>
        <dbReference type="EC" id="6.3.4.19"/>
    </reaction>
</comment>
<comment type="subcellular location">
    <subcellularLocation>
        <location evidence="1">Cytoplasm</location>
    </subcellularLocation>
</comment>
<comment type="domain">
    <text>The N-terminal region contains the highly conserved SGGXDS motif, predicted to be a P-loop motif involved in ATP binding.</text>
</comment>
<comment type="similarity">
    <text evidence="1">Belongs to the tRNA(Ile)-lysidine synthase family.</text>
</comment>
<dbReference type="EC" id="6.3.4.19" evidence="1"/>
<dbReference type="EMBL" id="AE017197">
    <property type="protein sequence ID" value="AAU03574.1"/>
    <property type="molecule type" value="Genomic_DNA"/>
</dbReference>
<dbReference type="RefSeq" id="WP_011190561.1">
    <property type="nucleotide sequence ID" value="NC_006142.1"/>
</dbReference>
<dbReference type="SMR" id="Q68XR8"/>
<dbReference type="KEGG" id="rty:RT0088"/>
<dbReference type="eggNOG" id="COG0037">
    <property type="taxonomic scope" value="Bacteria"/>
</dbReference>
<dbReference type="HOGENOM" id="CLU_018869_3_2_5"/>
<dbReference type="OrthoDB" id="9807403at2"/>
<dbReference type="Proteomes" id="UP000000604">
    <property type="component" value="Chromosome"/>
</dbReference>
<dbReference type="GO" id="GO:0005737">
    <property type="term" value="C:cytoplasm"/>
    <property type="evidence" value="ECO:0007669"/>
    <property type="project" value="UniProtKB-SubCell"/>
</dbReference>
<dbReference type="GO" id="GO:0005524">
    <property type="term" value="F:ATP binding"/>
    <property type="evidence" value="ECO:0007669"/>
    <property type="project" value="UniProtKB-UniRule"/>
</dbReference>
<dbReference type="GO" id="GO:0032267">
    <property type="term" value="F:tRNA(Ile)-lysidine synthase activity"/>
    <property type="evidence" value="ECO:0007669"/>
    <property type="project" value="UniProtKB-EC"/>
</dbReference>
<dbReference type="GO" id="GO:0006400">
    <property type="term" value="P:tRNA modification"/>
    <property type="evidence" value="ECO:0007669"/>
    <property type="project" value="UniProtKB-UniRule"/>
</dbReference>
<dbReference type="CDD" id="cd01992">
    <property type="entry name" value="TilS_N"/>
    <property type="match status" value="1"/>
</dbReference>
<dbReference type="Gene3D" id="3.40.50.620">
    <property type="entry name" value="HUPs"/>
    <property type="match status" value="1"/>
</dbReference>
<dbReference type="HAMAP" id="MF_01161">
    <property type="entry name" value="tRNA_Ile_lys_synt"/>
    <property type="match status" value="1"/>
</dbReference>
<dbReference type="InterPro" id="IPR014729">
    <property type="entry name" value="Rossmann-like_a/b/a_fold"/>
</dbReference>
<dbReference type="InterPro" id="IPR011063">
    <property type="entry name" value="TilS/TtcA_N"/>
</dbReference>
<dbReference type="InterPro" id="IPR012094">
    <property type="entry name" value="tRNA_Ile_lys_synt"/>
</dbReference>
<dbReference type="InterPro" id="IPR012795">
    <property type="entry name" value="tRNA_Ile_lys_synt_N"/>
</dbReference>
<dbReference type="NCBIfam" id="TIGR02432">
    <property type="entry name" value="lysidine_TilS_N"/>
    <property type="match status" value="1"/>
</dbReference>
<dbReference type="PANTHER" id="PTHR43033">
    <property type="entry name" value="TRNA(ILE)-LYSIDINE SYNTHASE-RELATED"/>
    <property type="match status" value="1"/>
</dbReference>
<dbReference type="PANTHER" id="PTHR43033:SF1">
    <property type="entry name" value="TRNA(ILE)-LYSIDINE SYNTHASE-RELATED"/>
    <property type="match status" value="1"/>
</dbReference>
<dbReference type="Pfam" id="PF01171">
    <property type="entry name" value="ATP_bind_3"/>
    <property type="match status" value="1"/>
</dbReference>
<dbReference type="SUPFAM" id="SSF52402">
    <property type="entry name" value="Adenine nucleotide alpha hydrolases-like"/>
    <property type="match status" value="1"/>
</dbReference>
<protein>
    <recommendedName>
        <fullName evidence="1">tRNA(Ile)-lysidine synthase</fullName>
        <ecNumber evidence="1">6.3.4.19</ecNumber>
    </recommendedName>
    <alternativeName>
        <fullName evidence="1">tRNA(Ile)-2-lysyl-cytidine synthase</fullName>
    </alternativeName>
    <alternativeName>
        <fullName evidence="1">tRNA(Ile)-lysidine synthetase</fullName>
    </alternativeName>
</protein>
<accession>Q68XR8</accession>
<evidence type="ECO:0000255" key="1">
    <source>
        <dbReference type="HAMAP-Rule" id="MF_01161"/>
    </source>
</evidence>
<gene>
    <name evidence="1" type="primary">tilS</name>
    <name type="ordered locus">RT0088</name>
</gene>
<feature type="chain" id="PRO_0000181758" description="tRNA(Ile)-lysidine synthase">
    <location>
        <begin position="1"/>
        <end position="430"/>
    </location>
</feature>
<feature type="binding site" evidence="1">
    <location>
        <begin position="27"/>
        <end position="32"/>
    </location>
    <ligand>
        <name>ATP</name>
        <dbReference type="ChEBI" id="CHEBI:30616"/>
    </ligand>
</feature>
<reference key="1">
    <citation type="journal article" date="2004" name="J. Bacteriol.">
        <title>Complete genome sequence of Rickettsia typhi and comparison with sequences of other Rickettsiae.</title>
        <authorList>
            <person name="McLeod M.P."/>
            <person name="Qin X."/>
            <person name="Karpathy S.E."/>
            <person name="Gioia J."/>
            <person name="Highlander S.K."/>
            <person name="Fox G.E."/>
            <person name="McNeill T.Z."/>
            <person name="Jiang H."/>
            <person name="Muzny D."/>
            <person name="Jacob L.S."/>
            <person name="Hawes A.C."/>
            <person name="Sodergren E."/>
            <person name="Gill R."/>
            <person name="Hume J."/>
            <person name="Morgan M."/>
            <person name="Fan G."/>
            <person name="Amin A.G."/>
            <person name="Gibbs R.A."/>
            <person name="Hong C."/>
            <person name="Yu X.-J."/>
            <person name="Walker D.H."/>
            <person name="Weinstock G.M."/>
        </authorList>
    </citation>
    <scope>NUCLEOTIDE SEQUENCE [LARGE SCALE GENOMIC DNA]</scope>
    <source>
        <strain>ATCC VR-144 / Wilmington</strain>
    </source>
</reference>
<sequence>MLYEKFEYNINNLVGNFGLSKIAIAVSGGSDSVALLYLANIWAEKNNIELFIISVDHNLRAQSKQENYYIQSISNNLKRKYYNLSFDHQNNFSNLQARAREGRYDLMTNLCLELDVLVLLTAHHEDDYVENFCLRLERNSGIFGLSSSNIHWYNNIQIIRPLYNIPKSELVKYLVTNKIKWFEDESNLSDKYRRNIIRQKLFKEENYIKAEISVQQLKTNKLIEDELKPELISAIGEAVKIFEYGFTFLDLVKFDKFSNEVKVQIINFLLIMISGQSRSARFYSIAPILKLISQNVNFKKTVHGCVITRIQNELLIYREFGKKLPKSKILLDKSVIWDNRFCITKNQETPDCVITYLSLEDYKVIKKQLDLKHLKNLSCKNHNAILFTLPIIKILEKVIAIPHISYYDNDMWNFEVSFAPNFVSRFTHFC</sequence>
<keyword id="KW-0067">ATP-binding</keyword>
<keyword id="KW-0963">Cytoplasm</keyword>
<keyword id="KW-0436">Ligase</keyword>
<keyword id="KW-0547">Nucleotide-binding</keyword>
<keyword id="KW-0819">tRNA processing</keyword>